<evidence type="ECO:0000250" key="1"/>
<evidence type="ECO:0000250" key="2">
    <source>
        <dbReference type="UniProtKB" id="P82009"/>
    </source>
</evidence>
<evidence type="ECO:0000250" key="3">
    <source>
        <dbReference type="UniProtKB" id="Q99442"/>
    </source>
</evidence>
<evidence type="ECO:0000255" key="4"/>
<evidence type="ECO:0000256" key="5">
    <source>
        <dbReference type="SAM" id="MobiDB-lite"/>
    </source>
</evidence>
<evidence type="ECO:0000305" key="6"/>
<accession>Q5R4Q3</accession>
<accession>Q5NVB7</accession>
<gene>
    <name type="primary">SEC62</name>
    <name type="synonym">TLOC1</name>
</gene>
<keyword id="KW-0256">Endoplasmic reticulum</keyword>
<keyword id="KW-0472">Membrane</keyword>
<keyword id="KW-0597">Phosphoprotein</keyword>
<keyword id="KW-0653">Protein transport</keyword>
<keyword id="KW-1185">Reference proteome</keyword>
<keyword id="KW-0811">Translocation</keyword>
<keyword id="KW-0812">Transmembrane</keyword>
<keyword id="KW-1133">Transmembrane helix</keyword>
<keyword id="KW-0813">Transport</keyword>
<sequence>MAERRRHKKRIQEVGEPSKEEKAVAKYLRFNCPTKSTNMMGHRVDYFIASKAVDCLLDSKWAKAKKGEEALFTTRESVVDYCNRLLKKQFFHRALKVMKMKYDKDIKKEKDKGKAESGKEEDKKSKKENIKDEKTKKEKEKKKDGEKEDSKKEETPGTPKKKETKKKFKLEPHDDQVFLDGNEVYVWIYDPVHFKTFVMGLILVIAVIAATLFPLWPAEMRVGVYYLSVGAGCFVASILLLAVARCILFLIIWLITGGRHHFWFLPNLTADVGFIDSFRPLYTHEYKGPKADLKKDEKSETKKQQKSDSEEKSDSEKKEDEEGKVGPGNHGTEGLGGERHSDTDSDRREDDRSQHSSGNGNDFEMITKEELEQQTDGDCEEEEEEENDGETPKSSHEKS</sequence>
<proteinExistence type="evidence at transcript level"/>
<reference key="1">
    <citation type="submission" date="2004-11" db="EMBL/GenBank/DDBJ databases">
        <authorList>
            <consortium name="The German cDNA consortium"/>
        </authorList>
    </citation>
    <scope>NUCLEOTIDE SEQUENCE [LARGE SCALE MRNA]</scope>
    <source>
        <tissue>Brain cortex</tissue>
    </source>
</reference>
<name>SEC62_PONAB</name>
<feature type="chain" id="PRO_0000206618" description="Translocation protein SEC62">
    <location>
        <begin position="1"/>
        <end position="399"/>
    </location>
</feature>
<feature type="topological domain" description="Cytoplasmic" evidence="4">
    <location>
        <begin position="1"/>
        <end position="196"/>
    </location>
</feature>
<feature type="transmembrane region" description="Helical" evidence="4">
    <location>
        <begin position="197"/>
        <end position="217"/>
    </location>
</feature>
<feature type="topological domain" description="Lumenal" evidence="4">
    <location>
        <begin position="218"/>
        <end position="234"/>
    </location>
</feature>
<feature type="transmembrane region" description="Helical" evidence="4">
    <location>
        <begin position="235"/>
        <end position="255"/>
    </location>
</feature>
<feature type="topological domain" description="Cytoplasmic" evidence="4">
    <location>
        <begin position="256"/>
        <end position="399"/>
    </location>
</feature>
<feature type="region of interest" description="Disordered" evidence="5">
    <location>
        <begin position="108"/>
        <end position="167"/>
    </location>
</feature>
<feature type="region of interest" description="Disordered" evidence="5">
    <location>
        <begin position="289"/>
        <end position="399"/>
    </location>
</feature>
<feature type="compositionally biased region" description="Basic and acidic residues" evidence="5">
    <location>
        <begin position="108"/>
        <end position="155"/>
    </location>
</feature>
<feature type="compositionally biased region" description="Basic and acidic residues" evidence="5">
    <location>
        <begin position="289"/>
        <end position="324"/>
    </location>
</feature>
<feature type="compositionally biased region" description="Gly residues" evidence="5">
    <location>
        <begin position="325"/>
        <end position="335"/>
    </location>
</feature>
<feature type="compositionally biased region" description="Basic and acidic residues" evidence="5">
    <location>
        <begin position="336"/>
        <end position="354"/>
    </location>
</feature>
<feature type="compositionally biased region" description="Acidic residues" evidence="5">
    <location>
        <begin position="372"/>
        <end position="389"/>
    </location>
</feature>
<feature type="compositionally biased region" description="Basic and acidic residues" evidence="5">
    <location>
        <begin position="390"/>
        <end position="399"/>
    </location>
</feature>
<feature type="modified residue" description="Phosphothreonine" evidence="3">
    <location>
        <position position="158"/>
    </location>
</feature>
<feature type="modified residue" description="Phosphoserine" evidence="3">
    <location>
        <position position="341"/>
    </location>
</feature>
<feature type="modified residue" description="Phosphoserine" evidence="3">
    <location>
        <position position="353"/>
    </location>
</feature>
<feature type="modified residue" description="Phosphoserine" evidence="3">
    <location>
        <position position="356"/>
    </location>
</feature>
<feature type="modified residue" description="Phosphothreonine" evidence="3">
    <location>
        <position position="375"/>
    </location>
</feature>
<feature type="sequence conflict" description="In Ref. 1; CAI29746." evidence="6" ref="1">
    <original>K</original>
    <variation>KK</variation>
    <location>
        <position position="137"/>
    </location>
</feature>
<feature type="sequence conflict" description="In Ref. 1; CAI29746." evidence="6" ref="1">
    <original>I</original>
    <variation>V</variation>
    <location>
        <position position="188"/>
    </location>
</feature>
<protein>
    <recommendedName>
        <fullName>Translocation protein SEC62</fullName>
    </recommendedName>
    <alternativeName>
        <fullName>Translocation protein 1</fullName>
        <shortName>TP-1</shortName>
    </alternativeName>
</protein>
<dbReference type="EMBL" id="CR861192">
    <property type="protein sequence ID" value="CAH93263.1"/>
    <property type="molecule type" value="mRNA"/>
</dbReference>
<dbReference type="EMBL" id="CR926121">
    <property type="protein sequence ID" value="CAI29746.1"/>
    <property type="status" value="ALT_INIT"/>
    <property type="molecule type" value="mRNA"/>
</dbReference>
<dbReference type="RefSeq" id="NP_001127648.1">
    <property type="nucleotide sequence ID" value="NM_001134176.1"/>
</dbReference>
<dbReference type="SMR" id="Q5R4Q3"/>
<dbReference type="FunCoup" id="Q5R4Q3">
    <property type="interactions" value="2691"/>
</dbReference>
<dbReference type="STRING" id="9601.ENSPPYP00000015966"/>
<dbReference type="Ensembl" id="ENSPPYT00000016605.3">
    <property type="protein sequence ID" value="ENSPPYP00000015966.2"/>
    <property type="gene ID" value="ENSPPYG00000014285.3"/>
</dbReference>
<dbReference type="GeneID" id="100174729"/>
<dbReference type="KEGG" id="pon:100174729"/>
<dbReference type="CTD" id="7095"/>
<dbReference type="eggNOG" id="KOG2927">
    <property type="taxonomic scope" value="Eukaryota"/>
</dbReference>
<dbReference type="GeneTree" id="ENSGT00390000002757"/>
<dbReference type="HOGENOM" id="CLU_051910_0_0_1"/>
<dbReference type="InParanoid" id="Q5R4Q3"/>
<dbReference type="OMA" id="CLLESPW"/>
<dbReference type="OrthoDB" id="200187at2759"/>
<dbReference type="TreeFam" id="TF314944"/>
<dbReference type="Proteomes" id="UP000001595">
    <property type="component" value="Chromosome 3"/>
</dbReference>
<dbReference type="GO" id="GO:0005789">
    <property type="term" value="C:endoplasmic reticulum membrane"/>
    <property type="evidence" value="ECO:0007669"/>
    <property type="project" value="UniProtKB-SubCell"/>
</dbReference>
<dbReference type="GO" id="GO:0005791">
    <property type="term" value="C:rough endoplasmic reticulum"/>
    <property type="evidence" value="ECO:0000250"/>
    <property type="project" value="UniProtKB"/>
</dbReference>
<dbReference type="GO" id="GO:0031204">
    <property type="term" value="P:post-translational protein targeting to membrane, translocation"/>
    <property type="evidence" value="ECO:0000250"/>
    <property type="project" value="UniProtKB"/>
</dbReference>
<dbReference type="InterPro" id="IPR004728">
    <property type="entry name" value="Sec62"/>
</dbReference>
<dbReference type="PANTHER" id="PTHR12443">
    <property type="entry name" value="TRANSLOCATION PROTEIN SEC62"/>
    <property type="match status" value="1"/>
</dbReference>
<dbReference type="PANTHER" id="PTHR12443:SF9">
    <property type="entry name" value="TRANSLOCATION PROTEIN SEC62"/>
    <property type="match status" value="1"/>
</dbReference>
<dbReference type="Pfam" id="PF03839">
    <property type="entry name" value="Sec62"/>
    <property type="match status" value="1"/>
</dbReference>
<organism>
    <name type="scientific">Pongo abelii</name>
    <name type="common">Sumatran orangutan</name>
    <name type="synonym">Pongo pygmaeus abelii</name>
    <dbReference type="NCBI Taxonomy" id="9601"/>
    <lineage>
        <taxon>Eukaryota</taxon>
        <taxon>Metazoa</taxon>
        <taxon>Chordata</taxon>
        <taxon>Craniata</taxon>
        <taxon>Vertebrata</taxon>
        <taxon>Euteleostomi</taxon>
        <taxon>Mammalia</taxon>
        <taxon>Eutheria</taxon>
        <taxon>Euarchontoglires</taxon>
        <taxon>Primates</taxon>
        <taxon>Haplorrhini</taxon>
        <taxon>Catarrhini</taxon>
        <taxon>Hominidae</taxon>
        <taxon>Pongo</taxon>
    </lineage>
</organism>
<comment type="function">
    <text evidence="3">Mediates post-translational transport of precursor polypeptides across endoplasmic reticulum (ER). Proposed to act as a targeting receptor for small presecretory proteins containing short and apolar signal peptides. Targets and properly positions newly synthesized presecretory proteins into the SEC61 channel-forming translocon complex, triggering channel opening for polypeptide translocation to the ER lumen.</text>
</comment>
<comment type="subunit">
    <text evidence="2 3">The ER translocon complex that consists of channel-forming core components SEC61A1, SEC61B and SEC61G and different auxiliary components such as SEC62 and SEC63. Interacts with SEC61B.</text>
</comment>
<comment type="subcellular location">
    <subcellularLocation>
        <location evidence="1">Endoplasmic reticulum membrane</location>
        <topology evidence="1">Multi-pass membrane protein</topology>
    </subcellularLocation>
</comment>
<comment type="similarity">
    <text evidence="6">Belongs to the SEC62 family.</text>
</comment>
<comment type="sequence caution" evidence="6">
    <conflict type="erroneous initiation">
        <sequence resource="EMBL-CDS" id="CAI29746"/>
    </conflict>
</comment>